<name>NUCL_MESAU</name>
<comment type="function">
    <text evidence="1 6">Nucleolin is the major nucleolar protein of growing eukaryotic cells. It is found associated with intranucleolar chromatin and pre-ribosomal particles. It induces chromatin decondensation by binding to histone H1. It is thought to play a role in pre-rRNA transcription and ribosome assembly. May play a role in the process of transcriptional elongation. Binds RNA oligonucleotides with 5'-UUAGGG-3' repeats more tightly than the telomeric single-stranded DNA 5'-TTAGGG-3' repeats (By similarity).</text>
</comment>
<comment type="subunit">
    <text evidence="2 3">Identified in a IGF2BP1-dependent mRNP granule complex containing untranslated mRNAs. Component of the SWAP complex that consists of NPM1, NCL/nucleolin, PARP1 and SWAP70. Component of a complex which is at least composed of HTATSF1/Tat-SF1, the P-TEFb complex components CDK9 and CCNT1, RNA polymerase II, SUPT5H, and NCL/nucleolin. Interacts with AICDA. Interacts with APTX. Interacts with C1QBP. Interacts with ERBB4. Interacts (via C-terminus) with FMR1 isoform 6 (via N-terminus). Interacts with GZF1; this interaction is important for nucleolar localization of GZF1. Interacts with NSUN2. Interacts with NVL. Interacts (via N-terminus domain) with SETX. Interacts (via RRM1 and C-terminal RRM4/Arg/Gly-rich domains) with TERT; the interaction is important for nucleolar localization of TERT. Interacts with WDR46. Interacts with ZFP36. Interacts with LRRC34. Interacts with RRP1B. Interacts with HNRNPU; this interaction occurs during mitosis. Interacts with RIOK1; RIOK1 recruits NCL to PRMT5 for symmetrically methylation (By similarity). Interacts with ZBTB7B (By similarity). Interacts with MDK; this interaction promotes NCL clustering and lateral movements of this complex into lipid rafts leading to MDK internalization (By similarity). Interacts with HDGF (By similarity). Interacts with ALKBH2. Interacts with IGFBP5; this interaction is necessary for IGFBP5 localization to the nucleus (By similarity). Interacts with DDX24 (when ubiquitinated); this interaction may be important during ribosome biogenesis (By similarity).</text>
</comment>
<comment type="subcellular location">
    <subcellularLocation>
        <location evidence="3">Nucleus</location>
        <location evidence="3">Nucleolus</location>
    </subcellularLocation>
    <subcellularLocation>
        <location evidence="1">Cytoplasm</location>
    </subcellularLocation>
    <text evidence="1">Localized in cytoplasmic mRNP granules containing untranslated mRNAs.</text>
</comment>
<comment type="PTM">
    <text evidence="1">Some glutamate residues are glycylated by TTLL8. This modification occurs exclusively on glutamate residues and results in a glycine chain on the gamma-carboxyl group (By similarity).</text>
</comment>
<comment type="PTM">
    <text evidence="3">Symmetrically methylated by PRMT5 (By similarity).</text>
</comment>
<feature type="initiator methionine" description="Removed" evidence="7">
    <location>
        <position position="1"/>
    </location>
</feature>
<feature type="chain" id="PRO_0000081692" description="Nucleolin">
    <location>
        <begin position="2"/>
        <end position="714"/>
    </location>
</feature>
<feature type="repeat" description="1">
    <location>
        <begin position="57"/>
        <end position="64"/>
    </location>
</feature>
<feature type="repeat" description="2">
    <location>
        <begin position="74"/>
        <end position="81"/>
    </location>
</feature>
<feature type="repeat" description="3">
    <location>
        <begin position="82"/>
        <end position="89"/>
    </location>
</feature>
<feature type="repeat" description="4">
    <location>
        <begin position="90"/>
        <end position="97"/>
    </location>
</feature>
<feature type="repeat" description="5; truncated">
    <location>
        <begin position="98"/>
        <end position="103"/>
    </location>
</feature>
<feature type="repeat" description="6">
    <location>
        <begin position="104"/>
        <end position="111"/>
    </location>
</feature>
<feature type="repeat" description="7">
    <location>
        <begin position="119"/>
        <end position="126"/>
    </location>
</feature>
<feature type="repeat" description="8">
    <location>
        <begin position="127"/>
        <end position="134"/>
    </location>
</feature>
<feature type="domain" description="RRM 1" evidence="4">
    <location>
        <begin position="308"/>
        <end position="384"/>
    </location>
</feature>
<feature type="domain" description="RRM 2" evidence="4">
    <location>
        <begin position="394"/>
        <end position="467"/>
    </location>
</feature>
<feature type="domain" description="RRM 3" evidence="4">
    <location>
        <begin position="486"/>
        <end position="560"/>
    </location>
</feature>
<feature type="domain" description="RRM 4" evidence="4">
    <location>
        <begin position="572"/>
        <end position="647"/>
    </location>
</feature>
<feature type="region of interest" description="Disordered" evidence="5">
    <location>
        <begin position="1"/>
        <end position="303"/>
    </location>
</feature>
<feature type="region of interest" description="8 X 8 AA tandem repeats of X-T-P-X-K-K-X-X">
    <location>
        <begin position="57"/>
        <end position="134"/>
    </location>
</feature>
<feature type="region of interest" description="Disordered" evidence="5">
    <location>
        <begin position="642"/>
        <end position="714"/>
    </location>
</feature>
<feature type="compositionally biased region" description="Acidic residues" evidence="5">
    <location>
        <begin position="24"/>
        <end position="42"/>
    </location>
</feature>
<feature type="compositionally biased region" description="Low complexity" evidence="5">
    <location>
        <begin position="55"/>
        <end position="106"/>
    </location>
</feature>
<feature type="compositionally biased region" description="Acidic residues" evidence="5">
    <location>
        <begin position="144"/>
        <end position="170"/>
    </location>
</feature>
<feature type="compositionally biased region" description="Low complexity" evidence="5">
    <location>
        <begin position="171"/>
        <end position="187"/>
    </location>
</feature>
<feature type="compositionally biased region" description="Acidic residues" evidence="5">
    <location>
        <begin position="188"/>
        <end position="216"/>
    </location>
</feature>
<feature type="compositionally biased region" description="Acidic residues" evidence="5">
    <location>
        <begin position="240"/>
        <end position="272"/>
    </location>
</feature>
<feature type="compositionally biased region" description="Basic and acidic residues" evidence="5">
    <location>
        <begin position="285"/>
        <end position="301"/>
    </location>
</feature>
<feature type="compositionally biased region" description="Gly residues" evidence="5">
    <location>
        <begin position="650"/>
        <end position="703"/>
    </location>
</feature>
<feature type="modified residue" description="N6-acetyllysine" evidence="3">
    <location>
        <position position="9"/>
    </location>
</feature>
<feature type="modified residue" description="N6-acetyllysine" evidence="2">
    <location>
        <position position="15"/>
    </location>
</feature>
<feature type="modified residue" description="N6-acetyllysine" evidence="2">
    <location>
        <position position="16"/>
    </location>
</feature>
<feature type="modified residue" description="Phosphoserine" evidence="3">
    <location>
        <position position="28"/>
    </location>
</feature>
<feature type="modified residue" description="Phosphoserine" evidence="3">
    <location>
        <position position="34"/>
    </location>
</feature>
<feature type="modified residue" description="Phosphoserine" evidence="2">
    <location>
        <position position="40"/>
    </location>
</feature>
<feature type="modified residue" description="Phosphoserine" evidence="3">
    <location>
        <position position="41"/>
    </location>
</feature>
<feature type="modified residue" description="Phosphoserine" evidence="3">
    <location>
        <position position="66"/>
    </location>
</feature>
<feature type="modified residue" description="Phosphothreonine" evidence="3">
    <location>
        <position position="68"/>
    </location>
</feature>
<feature type="modified residue" description="Phosphothreonine" evidence="3">
    <location>
        <position position="75"/>
    </location>
</feature>
<feature type="modified residue" description="Phosphothreonine" evidence="3">
    <location>
        <position position="83"/>
    </location>
</feature>
<feature type="modified residue" description="Phosphothreonine" evidence="3">
    <location>
        <position position="91"/>
    </location>
</feature>
<feature type="modified residue" description="N6-acetyllysine" evidence="2">
    <location>
        <position position="95"/>
    </location>
</feature>
<feature type="modified residue" description="Phosphothreonine" evidence="3">
    <location>
        <position position="98"/>
    </location>
</feature>
<feature type="modified residue" description="N6-acetyllysine" evidence="3">
    <location>
        <position position="101"/>
    </location>
</feature>
<feature type="modified residue" description="Phosphothreonine" evidence="3">
    <location>
        <position position="105"/>
    </location>
</feature>
<feature type="modified residue" description="N6-acetyllysine" evidence="2">
    <location>
        <position position="108"/>
    </location>
</feature>
<feature type="modified residue" description="Phosphothreonine" evidence="3">
    <location>
        <position position="112"/>
    </location>
</feature>
<feature type="modified residue" description="N6-acetyllysine" evidence="3">
    <location>
        <position position="115"/>
    </location>
</feature>
<feature type="modified residue" description="Phosphothreonine" evidence="3">
    <location>
        <position position="120"/>
    </location>
</feature>
<feature type="modified residue" description="N6-acetyllysine" evidence="3">
    <location>
        <position position="123"/>
    </location>
</feature>
<feature type="modified residue" description="Phosphoserine" evidence="3">
    <location>
        <position position="144"/>
    </location>
</feature>
<feature type="modified residue" description="Phosphoserine" evidence="2">
    <location>
        <position position="157"/>
    </location>
</feature>
<feature type="modified residue" description="Phosphoserine" evidence="3">
    <location>
        <position position="188"/>
    </location>
</feature>
<feature type="modified residue" description="Phosphothreonine" evidence="3">
    <location>
        <position position="219"/>
    </location>
</feature>
<feature type="modified residue" description="Phosphoserine" evidence="2">
    <location>
        <position position="302"/>
    </location>
</feature>
<feature type="modified residue" description="N6-acetyllysine" evidence="3">
    <location>
        <position position="319"/>
    </location>
</feature>
<feature type="modified residue" description="N6-acetyllysine" evidence="2">
    <location>
        <position position="349"/>
    </location>
</feature>
<feature type="modified residue" description="Phosphoserine" evidence="3">
    <location>
        <position position="357"/>
    </location>
</feature>
<feature type="modified residue" description="Phosphothreonine" evidence="3">
    <location>
        <position position="368"/>
    </location>
</feature>
<feature type="modified residue" description="N6-acetyllysine; alternate" evidence="3">
    <location>
        <position position="378"/>
    </location>
</feature>
<feature type="modified residue" description="N6-acetyllysine" evidence="3">
    <location>
        <position position="399"/>
    </location>
</feature>
<feature type="modified residue" description="Phosphoserine" evidence="2">
    <location>
        <position position="402"/>
    </location>
</feature>
<feature type="modified residue" description="Phosphothreonine" evidence="3">
    <location>
        <position position="406"/>
    </location>
</feature>
<feature type="modified residue" description="N6-acetyllysine" evidence="2">
    <location>
        <position position="428"/>
    </location>
</feature>
<feature type="modified residue" description="N6-acetyllysine" evidence="2">
    <location>
        <position position="445"/>
    </location>
</feature>
<feature type="modified residue" description="Phosphoserine" evidence="3">
    <location>
        <position position="459"/>
    </location>
</feature>
<feature type="modified residue" description="Phosphoserine" evidence="3">
    <location>
        <position position="461"/>
    </location>
</feature>
<feature type="modified residue" description="N6-acetyllysine" evidence="2">
    <location>
        <position position="468"/>
    </location>
</feature>
<feature type="modified residue" description="N6-acetyllysine" evidence="2">
    <location>
        <position position="477"/>
    </location>
</feature>
<feature type="modified residue" description="N6-acetyllysine; alternate" evidence="3">
    <location>
        <position position="513"/>
    </location>
</feature>
<feature type="modified residue" description="N6-acetyllysine" evidence="2">
    <location>
        <position position="521"/>
    </location>
</feature>
<feature type="modified residue" description="Phosphoserine" evidence="3">
    <location>
        <position position="563"/>
    </location>
</feature>
<feature type="modified residue" description="N6-acetyllysine" evidence="3">
    <location>
        <position position="572"/>
    </location>
</feature>
<feature type="modified residue" description="N6-acetyllysine; alternate" evidence="3">
    <location>
        <position position="577"/>
    </location>
</feature>
<feature type="modified residue" description="Phosphoserine" evidence="3">
    <location>
        <position position="580"/>
    </location>
</feature>
<feature type="modified residue" description="Phosphoserine" evidence="3">
    <location>
        <position position="591"/>
    </location>
</feature>
<feature type="modified residue" description="Phosphoserine" evidence="3">
    <location>
        <position position="619"/>
    </location>
</feature>
<feature type="modified residue" description="N6-acetyllysine" evidence="3">
    <location>
        <position position="646"/>
    </location>
</feature>
<feature type="modified residue" description="Asymmetric dimethylarginine" evidence="7 8">
    <location>
        <position position="656"/>
    </location>
</feature>
<feature type="modified residue" description="Asymmetric dimethylarginine" evidence="7 8">
    <location>
        <position position="660"/>
    </location>
</feature>
<feature type="modified residue" description="Asymmetric dimethylarginine" evidence="7 8">
    <location>
        <position position="666"/>
    </location>
</feature>
<feature type="modified residue" description="Asymmetric dimethylarginine" evidence="7 8">
    <location>
        <position position="670"/>
    </location>
</feature>
<feature type="modified residue" description="Asymmetric dimethylarginine" evidence="7 8">
    <location>
        <position position="674"/>
    </location>
</feature>
<feature type="modified residue" description="Asymmetric dimethylarginine" evidence="7">
    <location>
        <position position="680"/>
    </location>
</feature>
<feature type="modified residue" description="Asymmetric dimethylarginine" evidence="7">
    <location>
        <position position="682"/>
    </location>
</feature>
<feature type="modified residue" description="Asymmetric dimethylarginine" evidence="7">
    <location>
        <position position="688"/>
    </location>
</feature>
<feature type="modified residue" description="Asymmetric dimethylarginine" evidence="7">
    <location>
        <position position="692"/>
    </location>
</feature>
<feature type="modified residue" description="Asymmetric dimethylarginine; alternate" evidence="7">
    <location>
        <position position="695"/>
    </location>
</feature>
<feature type="modified residue" description="Omega-N-methylarginine; alternate" evidence="2">
    <location>
        <position position="695"/>
    </location>
</feature>
<feature type="cross-link" description="Glycyl lysine isopeptide (Lys-Gly) (interchain with G-Cter in SUMO1); alternate" evidence="3">
    <location>
        <position position="298"/>
    </location>
</feature>
<feature type="cross-link" description="Glycyl lysine isopeptide (Lys-Gly) (interchain with G-Cter in SUMO2); alternate" evidence="3">
    <location>
        <position position="298"/>
    </location>
</feature>
<feature type="cross-link" description="Glycyl lysine isopeptide (Lys-Gly) (interchain with G-Cter in SUMO1); alternate" evidence="3">
    <location>
        <position position="325"/>
    </location>
</feature>
<feature type="cross-link" description="Glycyl lysine isopeptide (Lys-Gly) (interchain with G-Cter in SUMO2); alternate" evidence="3">
    <location>
        <position position="325"/>
    </location>
</feature>
<feature type="cross-link" description="Glycyl lysine isopeptide (Lys-Gly) (interchain with G-Cter in SUMO2)" evidence="3">
    <location>
        <position position="371"/>
    </location>
</feature>
<feature type="cross-link" description="Glycyl lysine isopeptide (Lys-Gly) (interchain with G-Cter in SUMO2); alternate" evidence="3">
    <location>
        <position position="378"/>
    </location>
</feature>
<feature type="cross-link" description="Glycyl lysine isopeptide (Lys-Gly) (interchain with G-Cter in SUMO2); alternate" evidence="3">
    <location>
        <position position="513"/>
    </location>
</feature>
<feature type="cross-link" description="Glycyl lysine isopeptide (Lys-Gly) (interchain with G-Cter in SUMO2); alternate" evidence="3">
    <location>
        <position position="577"/>
    </location>
</feature>
<feature type="cross-link" description="Glycyl lysine isopeptide (Lys-Gly) (interchain with G-Cter in SUMO1); alternate" evidence="3">
    <location>
        <position position="589"/>
    </location>
</feature>
<feature type="cross-link" description="Glycyl lysine isopeptide (Lys-Gly) (interchain with G-Cter in SUMO2); alternate" evidence="3">
    <location>
        <position position="589"/>
    </location>
</feature>
<feature type="cross-link" description="Glycyl lysine isopeptide (Lys-Gly) (interchain with G-Cter in SUMO2)" evidence="3">
    <location>
        <position position="624"/>
    </location>
</feature>
<feature type="sequence conflict" description="In Ref. 3; AA sequence." evidence="9" ref="3">
    <original>C</original>
    <variation>G</variation>
    <location>
        <position position="543"/>
    </location>
</feature>
<feature type="sequence conflict" description="In Ref. 3; AA sequence." evidence="9" ref="3">
    <original>M</original>
    <variation>R</variation>
    <location>
        <position position="546"/>
    </location>
</feature>
<feature type="strand" evidence="12">
    <location>
        <begin position="300"/>
        <end position="303"/>
    </location>
</feature>
<feature type="strand" evidence="10">
    <location>
        <begin position="307"/>
        <end position="313"/>
    </location>
</feature>
<feature type="helix" evidence="10">
    <location>
        <begin position="321"/>
        <end position="335"/>
    </location>
</feature>
<feature type="strand" evidence="10">
    <location>
        <begin position="341"/>
        <end position="345"/>
    </location>
</feature>
<feature type="turn" evidence="10">
    <location>
        <begin position="346"/>
        <end position="349"/>
    </location>
</feature>
<feature type="strand" evidence="10">
    <location>
        <begin position="350"/>
        <end position="357"/>
    </location>
</feature>
<feature type="helix" evidence="10">
    <location>
        <begin position="358"/>
        <end position="366"/>
    </location>
</feature>
<feature type="helix" evidence="10">
    <location>
        <begin position="367"/>
        <end position="369"/>
    </location>
</feature>
<feature type="strand" evidence="12">
    <location>
        <begin position="370"/>
        <end position="372"/>
    </location>
</feature>
<feature type="strand" evidence="10">
    <location>
        <begin position="378"/>
        <end position="380"/>
    </location>
</feature>
<feature type="turn" evidence="11">
    <location>
        <begin position="384"/>
        <end position="387"/>
    </location>
</feature>
<feature type="turn" evidence="11">
    <location>
        <begin position="389"/>
        <end position="391"/>
    </location>
</feature>
<feature type="helix" evidence="11">
    <location>
        <begin position="392"/>
        <end position="394"/>
    </location>
</feature>
<feature type="strand" evidence="11">
    <location>
        <begin position="395"/>
        <end position="400"/>
    </location>
</feature>
<feature type="helix" evidence="11">
    <location>
        <begin position="407"/>
        <end position="414"/>
    </location>
</feature>
<feature type="strand" evidence="11">
    <location>
        <begin position="416"/>
        <end position="420"/>
    </location>
</feature>
<feature type="strand" evidence="11">
    <location>
        <begin position="423"/>
        <end position="425"/>
    </location>
</feature>
<feature type="strand" evidence="11">
    <location>
        <begin position="428"/>
        <end position="439"/>
    </location>
</feature>
<feature type="helix" evidence="11">
    <location>
        <begin position="440"/>
        <end position="449"/>
    </location>
</feature>
<feature type="strand" evidence="11">
    <location>
        <begin position="452"/>
        <end position="455"/>
    </location>
</feature>
<feature type="strand" evidence="11">
    <location>
        <begin position="458"/>
        <end position="464"/>
    </location>
</feature>
<feature type="strand" evidence="11">
    <location>
        <begin position="466"/>
        <end position="468"/>
    </location>
</feature>
<proteinExistence type="evidence at protein level"/>
<keyword id="KW-0002">3D-structure</keyword>
<keyword id="KW-0007">Acetylation</keyword>
<keyword id="KW-0963">Cytoplasm</keyword>
<keyword id="KW-0903">Direct protein sequencing</keyword>
<keyword id="KW-0238">DNA-binding</keyword>
<keyword id="KW-1017">Isopeptide bond</keyword>
<keyword id="KW-0488">Methylation</keyword>
<keyword id="KW-0539">Nucleus</keyword>
<keyword id="KW-0597">Phosphoprotein</keyword>
<keyword id="KW-1185">Reference proteome</keyword>
<keyword id="KW-0677">Repeat</keyword>
<keyword id="KW-0694">RNA-binding</keyword>
<keyword id="KW-0832">Ubl conjugation</keyword>
<evidence type="ECO:0000250" key="1"/>
<evidence type="ECO:0000250" key="2">
    <source>
        <dbReference type="UniProtKB" id="P09405"/>
    </source>
</evidence>
<evidence type="ECO:0000250" key="3">
    <source>
        <dbReference type="UniProtKB" id="P19338"/>
    </source>
</evidence>
<evidence type="ECO:0000255" key="4">
    <source>
        <dbReference type="PROSITE-ProRule" id="PRU00176"/>
    </source>
</evidence>
<evidence type="ECO:0000256" key="5">
    <source>
        <dbReference type="SAM" id="MobiDB-lite"/>
    </source>
</evidence>
<evidence type="ECO:0000269" key="6">
    <source>
    </source>
</evidence>
<evidence type="ECO:0000269" key="7">
    <source>
    </source>
</evidence>
<evidence type="ECO:0000269" key="8">
    <source>
    </source>
</evidence>
<evidence type="ECO:0000305" key="9"/>
<evidence type="ECO:0007829" key="10">
    <source>
        <dbReference type="PDB" id="1FJ7"/>
    </source>
</evidence>
<evidence type="ECO:0007829" key="11">
    <source>
        <dbReference type="PDB" id="1FJC"/>
    </source>
</evidence>
<evidence type="ECO:0007829" key="12">
    <source>
        <dbReference type="PDB" id="1FJE"/>
    </source>
</evidence>
<protein>
    <recommendedName>
        <fullName>Nucleolin</fullName>
    </recommendedName>
    <alternativeName>
        <fullName>Protein C23</fullName>
    </alternativeName>
</protein>
<accession>P08199</accession>
<dbReference type="EMBL" id="M15825">
    <property type="protein sequence ID" value="AAA36966.1"/>
    <property type="molecule type" value="mRNA"/>
</dbReference>
<dbReference type="PIR" id="A27441">
    <property type="entry name" value="A27441"/>
</dbReference>
<dbReference type="PDB" id="1FJ7">
    <property type="method" value="NMR"/>
    <property type="chains" value="A=299-391"/>
</dbReference>
<dbReference type="PDB" id="1FJC">
    <property type="method" value="NMR"/>
    <property type="chains" value="A=387-469"/>
</dbReference>
<dbReference type="PDB" id="1FJE">
    <property type="method" value="NMR"/>
    <property type="chains" value="B=299-469"/>
</dbReference>
<dbReference type="PDB" id="1RKJ">
    <property type="method" value="NMR"/>
    <property type="chains" value="A=299-469"/>
</dbReference>
<dbReference type="PDBsum" id="1FJ7"/>
<dbReference type="PDBsum" id="1FJC"/>
<dbReference type="PDBsum" id="1FJE"/>
<dbReference type="PDBsum" id="1RKJ"/>
<dbReference type="SMR" id="P08199"/>
<dbReference type="iPTMnet" id="P08199"/>
<dbReference type="EvolutionaryTrace" id="P08199"/>
<dbReference type="Proteomes" id="UP000189706">
    <property type="component" value="Unplaced"/>
</dbReference>
<dbReference type="GO" id="GO:0005737">
    <property type="term" value="C:cytoplasm"/>
    <property type="evidence" value="ECO:0007669"/>
    <property type="project" value="UniProtKB-SubCell"/>
</dbReference>
<dbReference type="GO" id="GO:0005730">
    <property type="term" value="C:nucleolus"/>
    <property type="evidence" value="ECO:0007669"/>
    <property type="project" value="UniProtKB-SubCell"/>
</dbReference>
<dbReference type="GO" id="GO:1990904">
    <property type="term" value="C:ribonucleoprotein complex"/>
    <property type="evidence" value="ECO:0000250"/>
    <property type="project" value="UniProtKB"/>
</dbReference>
<dbReference type="GO" id="GO:0003729">
    <property type="term" value="F:mRNA binding"/>
    <property type="evidence" value="ECO:0007669"/>
    <property type="project" value="TreeGrafter"/>
</dbReference>
<dbReference type="GO" id="GO:0003723">
    <property type="term" value="F:RNA binding"/>
    <property type="evidence" value="ECO:0000250"/>
    <property type="project" value="UniProtKB"/>
</dbReference>
<dbReference type="GO" id="GO:0042162">
    <property type="term" value="F:telomeric DNA binding"/>
    <property type="evidence" value="ECO:0000250"/>
    <property type="project" value="UniProtKB"/>
</dbReference>
<dbReference type="CDD" id="cd12403">
    <property type="entry name" value="RRM1_NCL"/>
    <property type="match status" value="1"/>
</dbReference>
<dbReference type="CDD" id="cd12404">
    <property type="entry name" value="RRM2_NCL"/>
    <property type="match status" value="1"/>
</dbReference>
<dbReference type="CDD" id="cd12405">
    <property type="entry name" value="RRM3_NCL"/>
    <property type="match status" value="1"/>
</dbReference>
<dbReference type="CDD" id="cd12406">
    <property type="entry name" value="RRM4_NCL"/>
    <property type="match status" value="1"/>
</dbReference>
<dbReference type="FunFam" id="3.30.70.330:FF:000278">
    <property type="entry name" value="Nucleolin"/>
    <property type="match status" value="1"/>
</dbReference>
<dbReference type="FunFam" id="3.30.70.330:FF:001072">
    <property type="entry name" value="Nucleolin"/>
    <property type="match status" value="1"/>
</dbReference>
<dbReference type="FunFam" id="3.30.70.330:FF:000264">
    <property type="entry name" value="nucleolin"/>
    <property type="match status" value="1"/>
</dbReference>
<dbReference type="FunFam" id="3.30.70.330:FF:000265">
    <property type="entry name" value="nucleolin isoform X1"/>
    <property type="match status" value="1"/>
</dbReference>
<dbReference type="Gene3D" id="3.30.70.330">
    <property type="match status" value="4"/>
</dbReference>
<dbReference type="InterPro" id="IPR050502">
    <property type="entry name" value="Euk_RNA-bind_prot"/>
</dbReference>
<dbReference type="InterPro" id="IPR034230">
    <property type="entry name" value="Nucleolin_RRM1"/>
</dbReference>
<dbReference type="InterPro" id="IPR034233">
    <property type="entry name" value="Nucleolin_RRM2"/>
</dbReference>
<dbReference type="InterPro" id="IPR034234">
    <property type="entry name" value="Nucleolin_RRM3"/>
</dbReference>
<dbReference type="InterPro" id="IPR034235">
    <property type="entry name" value="Nucleolin_RRM4"/>
</dbReference>
<dbReference type="InterPro" id="IPR012677">
    <property type="entry name" value="Nucleotide-bd_a/b_plait_sf"/>
</dbReference>
<dbReference type="InterPro" id="IPR035979">
    <property type="entry name" value="RBD_domain_sf"/>
</dbReference>
<dbReference type="InterPro" id="IPR000504">
    <property type="entry name" value="RRM_dom"/>
</dbReference>
<dbReference type="PANTHER" id="PTHR48025">
    <property type="entry name" value="OS02G0815200 PROTEIN"/>
    <property type="match status" value="1"/>
</dbReference>
<dbReference type="PANTHER" id="PTHR48025:SF1">
    <property type="entry name" value="RRM DOMAIN-CONTAINING PROTEIN"/>
    <property type="match status" value="1"/>
</dbReference>
<dbReference type="Pfam" id="PF00076">
    <property type="entry name" value="RRM_1"/>
    <property type="match status" value="4"/>
</dbReference>
<dbReference type="SMART" id="SM00360">
    <property type="entry name" value="RRM"/>
    <property type="match status" value="4"/>
</dbReference>
<dbReference type="SUPFAM" id="SSF54928">
    <property type="entry name" value="RNA-binding domain, RBD"/>
    <property type="match status" value="4"/>
</dbReference>
<dbReference type="PROSITE" id="PS50102">
    <property type="entry name" value="RRM"/>
    <property type="match status" value="4"/>
</dbReference>
<sequence length="714" mass="77128">MVKLAKAGKTHGEAKKMAPPPKEVEEDSEDEEMSEEEDDSSGEEVVIPQKKGKKATATPAKKVVVSQTKKVAVPTPAKKAAVTPGKKAAATPAKKAVTPAKAVATPGKKGATQAKALVATPGKKGAVTPAKGAKNGKNAKKEDSDEDEDDDDDEDDSDEDEEDEEEDEFEPPVVKGKQGKVAAAAPASEDEDEEEDEEEEEEDEEEEDDSEEEEAMEITPAKGKKAPAKVVPVKAKNVAEEDDDDEEEDEDEEEDEEEEEDEEEEEEEEEEEPVKPAPGKRKKEMTKQKEVPEAKKQKVEGSESTTPFNLFIGNLNPNKSVAELKVAISEPFAKNDLAVVDVRTGTNRKFGYVDFESAEDLEKALELTGLKVFGNEIKLEKPKGRDSKKVRAARTLLAKNLSFNITEDELKEVFEDALEIRLVSQDGKSKGIAYIEFKSEADAEKNLEEKQGAEIDGRSVSLYYTGEKGQRQERTGKNSTWSGESKTLVLSNLSYSATEETLQEVFEKATFIKVPQNQQGKSKGYAFIEFASFEDAKEALNSCNKMEIEGRTIRLELQGPRGSPNARSQPSKTLFVKGLSEDTTEETLKESFEGSVRARIVTDRETGSSKGFGFVDFNSEEDAKAAKEAMEDGEIDGNKVTLDWAKPKGEGGFGGRGGGRGGFGGRGGGRGGGRGGFGGRGRGGFGGRGGFRGGRGGGGGGGDFKPQGKKTKFE</sequence>
<reference key="1">
    <citation type="journal article" date="1987" name="Proc. Natl. Acad. Sci. U.S.A.">
        <title>Nucleolin, the major nucleolar protein of growing eukaryotic cells: an unusual protein structure revealed by the nucleotide sequence.</title>
        <authorList>
            <person name="Lapeyre B."/>
            <person name="Bourbon H."/>
            <person name="Amalric F."/>
        </authorList>
    </citation>
    <scope>NUCLEOTIDE SEQUENCE [MRNA] OF 36-714</scope>
    <scope>PROTEIN SEQUENCE OF 2-35</scope>
    <scope>METHYLATION AT ARG-656; ARG-660; ARG-666; ARG-670; ARG-674; ARG-680; ARG-682; ARG-688; ARG-692 AND ARG-695</scope>
</reference>
<reference key="2">
    <citation type="journal article" date="1985" name="Nucleic Acids Res.">
        <title>Cloning of cDNA encoding a 100 kDa nucleolar protein (nucleoline) of Chinese hamster ovary cells.</title>
        <authorList>
            <person name="Lapeyre B."/>
            <person name="Caizergues-Ferrer M."/>
            <person name="Bouche G."/>
            <person name="Amalric F."/>
        </authorList>
    </citation>
    <scope>NUCLEOTIDE SEQUENCE [MRNA] OF 180-239</scope>
</reference>
<reference key="3">
    <citation type="journal article" date="1986" name="J. Biol. Chem.">
        <title>Protein and cDNA sequence of a glycine-rich, dimethylarginine-containing region located near the carboxyl-terminal end of nucleolin (C23 and 100 kDa).</title>
        <authorList>
            <person name="Lapeyre B."/>
            <person name="Amalric F."/>
            <person name="Ghaffari S.H."/>
            <person name="Rao S.V.V."/>
            <person name="Dumbar T.S."/>
            <person name="Olson M.O.J."/>
        </authorList>
    </citation>
    <scope>NUCLEOTIDE SEQUENCE [MRNA] OF 523-714</scope>
    <scope>PROTEIN SEQUENCE OF 631-672</scope>
    <scope>METHYLATION AT ARG-656; ARG-660; ARG-666; ARG-670 AND ARG-674</scope>
</reference>
<reference key="4">
    <citation type="journal article" date="1988" name="Eur. J. Biochem.">
        <title>A major nucleolar protein, nucleolin, induces chromatin decondensation by binding to histone H1.</title>
        <authorList>
            <person name="Erard M.S."/>
            <person name="Belenguer P."/>
            <person name="Caizergues-Ferrer M."/>
            <person name="Pantaloni A."/>
            <person name="Amalric F."/>
        </authorList>
    </citation>
    <scope>FUNCTION</scope>
</reference>
<reference key="5">
    <citation type="journal article" date="2000" name="J. Mol. Biol.">
        <title>Solution structure of the two N-terminal RNA-binding domains of nucleolin and NMR study of the interaction with its RNA target.</title>
        <authorList>
            <person name="Allain F.H.-T."/>
            <person name="Gilbert D.E."/>
            <person name="Bouvet P."/>
            <person name="Feigon J."/>
        </authorList>
    </citation>
    <scope>STRUCTURE BY NMR OF 291-391; 376-473 AND 295-469</scope>
</reference>
<gene>
    <name type="primary">NCL</name>
</gene>
<organism>
    <name type="scientific">Mesocricetus auratus</name>
    <name type="common">Golden hamster</name>
    <dbReference type="NCBI Taxonomy" id="10036"/>
    <lineage>
        <taxon>Eukaryota</taxon>
        <taxon>Metazoa</taxon>
        <taxon>Chordata</taxon>
        <taxon>Craniata</taxon>
        <taxon>Vertebrata</taxon>
        <taxon>Euteleostomi</taxon>
        <taxon>Mammalia</taxon>
        <taxon>Eutheria</taxon>
        <taxon>Euarchontoglires</taxon>
        <taxon>Glires</taxon>
        <taxon>Rodentia</taxon>
        <taxon>Myomorpha</taxon>
        <taxon>Muroidea</taxon>
        <taxon>Cricetidae</taxon>
        <taxon>Cricetinae</taxon>
        <taxon>Mesocricetus</taxon>
    </lineage>
</organism>